<dbReference type="EC" id="1.1.1.17" evidence="1"/>
<dbReference type="EMBL" id="CU928164">
    <property type="protein sequence ID" value="CAR20223.1"/>
    <property type="molecule type" value="Genomic_DNA"/>
</dbReference>
<dbReference type="RefSeq" id="WP_000645417.1">
    <property type="nucleotide sequence ID" value="NC_011750.1"/>
</dbReference>
<dbReference type="RefSeq" id="YP_002409994.1">
    <property type="nucleotide sequence ID" value="NC_011750.1"/>
</dbReference>
<dbReference type="SMR" id="B7NPA3"/>
<dbReference type="STRING" id="585057.ECIAI39_4115"/>
<dbReference type="KEGG" id="ect:ECIAI39_4115"/>
<dbReference type="PATRIC" id="fig|585057.6.peg.4267"/>
<dbReference type="HOGENOM" id="CLU_036089_2_0_6"/>
<dbReference type="Proteomes" id="UP000000749">
    <property type="component" value="Chromosome"/>
</dbReference>
<dbReference type="GO" id="GO:0005829">
    <property type="term" value="C:cytosol"/>
    <property type="evidence" value="ECO:0007669"/>
    <property type="project" value="TreeGrafter"/>
</dbReference>
<dbReference type="GO" id="GO:0008926">
    <property type="term" value="F:mannitol-1-phosphate 5-dehydrogenase activity"/>
    <property type="evidence" value="ECO:0007669"/>
    <property type="project" value="UniProtKB-UniRule"/>
</dbReference>
<dbReference type="GO" id="GO:0019592">
    <property type="term" value="P:mannitol catabolic process"/>
    <property type="evidence" value="ECO:0007669"/>
    <property type="project" value="TreeGrafter"/>
</dbReference>
<dbReference type="FunFam" id="1.10.1040.10:FF:000009">
    <property type="entry name" value="Mannitol-1-phosphate 5-dehydrogenase"/>
    <property type="match status" value="1"/>
</dbReference>
<dbReference type="FunFam" id="3.40.50.720:FF:000075">
    <property type="entry name" value="Mannitol-1-phosphate 5-dehydrogenase"/>
    <property type="match status" value="1"/>
</dbReference>
<dbReference type="Gene3D" id="1.10.1040.10">
    <property type="entry name" value="N-(1-d-carboxylethyl)-l-norvaline Dehydrogenase, domain 2"/>
    <property type="match status" value="1"/>
</dbReference>
<dbReference type="Gene3D" id="3.40.50.720">
    <property type="entry name" value="NAD(P)-binding Rossmann-like Domain"/>
    <property type="match status" value="1"/>
</dbReference>
<dbReference type="HAMAP" id="MF_00196">
    <property type="entry name" value="Mannitol_dehydrog"/>
    <property type="match status" value="1"/>
</dbReference>
<dbReference type="InterPro" id="IPR008927">
    <property type="entry name" value="6-PGluconate_DH-like_C_sf"/>
</dbReference>
<dbReference type="InterPro" id="IPR013328">
    <property type="entry name" value="6PGD_dom2"/>
</dbReference>
<dbReference type="InterPro" id="IPR023028">
    <property type="entry name" value="Mannitol_1_phos_5_DH"/>
</dbReference>
<dbReference type="InterPro" id="IPR000669">
    <property type="entry name" value="Mannitol_DH"/>
</dbReference>
<dbReference type="InterPro" id="IPR013118">
    <property type="entry name" value="Mannitol_DH_C"/>
</dbReference>
<dbReference type="InterPro" id="IPR023027">
    <property type="entry name" value="Mannitol_DH_CS"/>
</dbReference>
<dbReference type="InterPro" id="IPR013131">
    <property type="entry name" value="Mannitol_DH_N"/>
</dbReference>
<dbReference type="InterPro" id="IPR036291">
    <property type="entry name" value="NAD(P)-bd_dom_sf"/>
</dbReference>
<dbReference type="NCBIfam" id="NF002646">
    <property type="entry name" value="PRK02318.1-2"/>
    <property type="match status" value="1"/>
</dbReference>
<dbReference type="NCBIfam" id="NF002647">
    <property type="entry name" value="PRK02318.1-3"/>
    <property type="match status" value="1"/>
</dbReference>
<dbReference type="NCBIfam" id="NF002648">
    <property type="entry name" value="PRK02318.1-4"/>
    <property type="match status" value="1"/>
</dbReference>
<dbReference type="NCBIfam" id="NF002650">
    <property type="entry name" value="PRK02318.2-2"/>
    <property type="match status" value="1"/>
</dbReference>
<dbReference type="NCBIfam" id="NF002652">
    <property type="entry name" value="PRK02318.2-5"/>
    <property type="match status" value="1"/>
</dbReference>
<dbReference type="PANTHER" id="PTHR30524:SF0">
    <property type="entry name" value="ALTRONATE OXIDOREDUCTASE-RELATED"/>
    <property type="match status" value="1"/>
</dbReference>
<dbReference type="PANTHER" id="PTHR30524">
    <property type="entry name" value="MANNITOL-1-PHOSPHATE 5-DEHYDROGENASE"/>
    <property type="match status" value="1"/>
</dbReference>
<dbReference type="Pfam" id="PF01232">
    <property type="entry name" value="Mannitol_dh"/>
    <property type="match status" value="1"/>
</dbReference>
<dbReference type="Pfam" id="PF08125">
    <property type="entry name" value="Mannitol_dh_C"/>
    <property type="match status" value="1"/>
</dbReference>
<dbReference type="PRINTS" id="PR00084">
    <property type="entry name" value="MTLDHDRGNASE"/>
</dbReference>
<dbReference type="SUPFAM" id="SSF48179">
    <property type="entry name" value="6-phosphogluconate dehydrogenase C-terminal domain-like"/>
    <property type="match status" value="1"/>
</dbReference>
<dbReference type="SUPFAM" id="SSF51735">
    <property type="entry name" value="NAD(P)-binding Rossmann-fold domains"/>
    <property type="match status" value="1"/>
</dbReference>
<dbReference type="PROSITE" id="PS00974">
    <property type="entry name" value="MANNITOL_DHGENASE"/>
    <property type="match status" value="1"/>
</dbReference>
<comment type="catalytic activity">
    <reaction evidence="1">
        <text>D-mannitol 1-phosphate + NAD(+) = beta-D-fructose 6-phosphate + NADH + H(+)</text>
        <dbReference type="Rhea" id="RHEA:19661"/>
        <dbReference type="ChEBI" id="CHEBI:15378"/>
        <dbReference type="ChEBI" id="CHEBI:57540"/>
        <dbReference type="ChEBI" id="CHEBI:57634"/>
        <dbReference type="ChEBI" id="CHEBI:57945"/>
        <dbReference type="ChEBI" id="CHEBI:61381"/>
        <dbReference type="EC" id="1.1.1.17"/>
    </reaction>
</comment>
<comment type="similarity">
    <text evidence="1">Belongs to the mannitol dehydrogenase family.</text>
</comment>
<proteinExistence type="inferred from homology"/>
<accession>B7NPA3</accession>
<reference key="1">
    <citation type="journal article" date="2009" name="PLoS Genet.">
        <title>Organised genome dynamics in the Escherichia coli species results in highly diverse adaptive paths.</title>
        <authorList>
            <person name="Touchon M."/>
            <person name="Hoede C."/>
            <person name="Tenaillon O."/>
            <person name="Barbe V."/>
            <person name="Baeriswyl S."/>
            <person name="Bidet P."/>
            <person name="Bingen E."/>
            <person name="Bonacorsi S."/>
            <person name="Bouchier C."/>
            <person name="Bouvet O."/>
            <person name="Calteau A."/>
            <person name="Chiapello H."/>
            <person name="Clermont O."/>
            <person name="Cruveiller S."/>
            <person name="Danchin A."/>
            <person name="Diard M."/>
            <person name="Dossat C."/>
            <person name="Karoui M.E."/>
            <person name="Frapy E."/>
            <person name="Garry L."/>
            <person name="Ghigo J.M."/>
            <person name="Gilles A.M."/>
            <person name="Johnson J."/>
            <person name="Le Bouguenec C."/>
            <person name="Lescat M."/>
            <person name="Mangenot S."/>
            <person name="Martinez-Jehanne V."/>
            <person name="Matic I."/>
            <person name="Nassif X."/>
            <person name="Oztas S."/>
            <person name="Petit M.A."/>
            <person name="Pichon C."/>
            <person name="Rouy Z."/>
            <person name="Ruf C.S."/>
            <person name="Schneider D."/>
            <person name="Tourret J."/>
            <person name="Vacherie B."/>
            <person name="Vallenet D."/>
            <person name="Medigue C."/>
            <person name="Rocha E.P.C."/>
            <person name="Denamur E."/>
        </authorList>
    </citation>
    <scope>NUCLEOTIDE SEQUENCE [LARGE SCALE GENOMIC DNA]</scope>
    <source>
        <strain>IAI39 / ExPEC</strain>
    </source>
</reference>
<name>MTLD_ECO7I</name>
<protein>
    <recommendedName>
        <fullName evidence="1">Mannitol-1-phosphate 5-dehydrogenase</fullName>
        <ecNumber evidence="1">1.1.1.17</ecNumber>
    </recommendedName>
</protein>
<feature type="chain" id="PRO_1000118655" description="Mannitol-1-phosphate 5-dehydrogenase">
    <location>
        <begin position="1"/>
        <end position="382"/>
    </location>
</feature>
<feature type="binding site" evidence="1">
    <location>
        <begin position="3"/>
        <end position="14"/>
    </location>
    <ligand>
        <name>NAD(+)</name>
        <dbReference type="ChEBI" id="CHEBI:57540"/>
    </ligand>
</feature>
<feature type="modified residue" description="N6-acetyllysine" evidence="1">
    <location>
        <position position="269"/>
    </location>
</feature>
<organism>
    <name type="scientific">Escherichia coli O7:K1 (strain IAI39 / ExPEC)</name>
    <dbReference type="NCBI Taxonomy" id="585057"/>
    <lineage>
        <taxon>Bacteria</taxon>
        <taxon>Pseudomonadati</taxon>
        <taxon>Pseudomonadota</taxon>
        <taxon>Gammaproteobacteria</taxon>
        <taxon>Enterobacterales</taxon>
        <taxon>Enterobacteriaceae</taxon>
        <taxon>Escherichia</taxon>
    </lineage>
</organism>
<gene>
    <name evidence="1" type="primary">mtlD</name>
    <name type="ordered locus">ECIAI39_4115</name>
</gene>
<evidence type="ECO:0000255" key="1">
    <source>
        <dbReference type="HAMAP-Rule" id="MF_00196"/>
    </source>
</evidence>
<sequence>MKALHFGAGNIGRGFIGKLLADAGIQLTFADVNQVVLDALNARHSYQVHVVGETEQVDTVSGVNAVSSIGDDVVDLIAQVDLVTTAVGPVVLERIAPAIAKGLVKRKEQGNESPLNIIACENMVRGTTQLKGHVMNALPEDAKAWVEEHVGFVDSAVDRIVPPSASATNDPLEVTVETFSEWIVDKTQFKGALPNIPGMELTDNLMAFVERKLFTLNTGHAITAYLGKLAAHQTIRDAILDEKIRAVVKGAMEESGAVLIKRYGFDADKHAAYIQKILGRFENPYLKDDVERVGRQPLRKLSAGDRLIKPLLGTLEYGLPHKNLIEGIAAAMHFRSEDDPQAQELAALIADKGPQAALAQISGLDANSEVVSEAVTAYKAMQ</sequence>
<keyword id="KW-0007">Acetylation</keyword>
<keyword id="KW-0520">NAD</keyword>
<keyword id="KW-0560">Oxidoreductase</keyword>